<keyword id="KW-0973">c-di-GMP</keyword>
<keyword id="KW-0997">Cell inner membrane</keyword>
<keyword id="KW-1003">Cell membrane</keyword>
<keyword id="KW-0135">Cellulose biosynthesis</keyword>
<keyword id="KW-0328">Glycosyltransferase</keyword>
<keyword id="KW-0472">Membrane</keyword>
<keyword id="KW-1185">Reference proteome</keyword>
<keyword id="KW-0808">Transferase</keyword>
<keyword id="KW-0812">Transmembrane</keyword>
<keyword id="KW-1133">Transmembrane helix</keyword>
<comment type="function">
    <text evidence="1">Catalytic subunit of cellulose synthase. It polymerizes uridine 5'-diphosphate glucose to cellulose, which is produced as an extracellular component for mechanical and chemical protection at the onset of the stationary phase, when the cells exhibit multicellular behavior (rdar morphotype). Coexpression of cellulose and thin aggregative fimbriae leads to a hydrophobic network with tightly packed cells embedded in a highly inert matrix (By similarity).</text>
</comment>
<comment type="catalytic activity">
    <reaction>
        <text>[(1-&gt;4)-beta-D-glucosyl](n) + UDP-alpha-D-glucose = [(1-&gt;4)-beta-D-glucosyl](n+1) + UDP + H(+)</text>
        <dbReference type="Rhea" id="RHEA:19929"/>
        <dbReference type="Rhea" id="RHEA-COMP:10033"/>
        <dbReference type="Rhea" id="RHEA-COMP:10034"/>
        <dbReference type="ChEBI" id="CHEBI:15378"/>
        <dbReference type="ChEBI" id="CHEBI:18246"/>
        <dbReference type="ChEBI" id="CHEBI:58223"/>
        <dbReference type="ChEBI" id="CHEBI:58885"/>
        <dbReference type="EC" id="2.4.1.12"/>
    </reaction>
</comment>
<comment type="cofactor">
    <cofactor evidence="1">
        <name>Mg(2+)</name>
        <dbReference type="ChEBI" id="CHEBI:18420"/>
    </cofactor>
</comment>
<comment type="activity regulation">
    <text evidence="1">Activated by bis-(3'-5') cyclic diguanylic acid (c-di-GMP).</text>
</comment>
<comment type="pathway">
    <text>Glycan metabolism; bacterial cellulose biosynthesis.</text>
</comment>
<comment type="subcellular location">
    <subcellularLocation>
        <location evidence="3">Cell inner membrane</location>
        <topology evidence="3">Multi-pass membrane protein</topology>
    </subcellularLocation>
</comment>
<comment type="domain">
    <text>There are two conserved domains in the globular part of the protein: the N-terminal domain (domain A) contains the conserved DXD motif and is possibly involved in catalysis and substrate binding. The C-terminal domain (domain B) contains the QXXRW motif and is present only in processive glycosyl transferases. It could be involved in the processivity function of the enzyme, possibly required for holding the growing glycan chain in the active site.</text>
</comment>
<comment type="similarity">
    <text evidence="3">Belongs to the glycosyltransferase 2 family.</text>
</comment>
<comment type="sequence caution" evidence="3">
    <conflict type="erroneous initiation">
        <sequence resource="EMBL-CDS" id="AAG58675"/>
    </conflict>
    <text>Extended N-terminus.</text>
</comment>
<sequence>MSILTRWLLIPPVNARLIGRYRDYRRHGASAFSATLGCFWMILAWIFIPLEHPRWQRIRAEHKNLYPHINASRPRPLDPVRYLIQTCWLLIGASRKETPKPRRRAFSGLQNIRGRYHQWMNELPERVSHKTQHLDEKKELGHLSAGARRLILGIIVTFSLILALICVTQPFNPLAQFIFLMLLWGGALIVRRMPGRFSALMLIVLSLTVSCRYIWWRYTSTLNWDDPVSLVCGLILLFAETYAWIVLVLGYFQVVWPLNRQPVPLPKDMSLWPSVDIFVPTYNEDLNVVKNTIYASLGIDWPKDKLNIWILDDGGREEFRQFAQNVGVKYIARTTHEHAKAGNINNALKYAKGEFVSIFDCDHVPTRSFLQMTVGWFLKEKQLAMMQTPHHFFSPDPFERNLGRFRKTPNEGTLFYGLVQDGNDMWDATFFCGSCAVIRRKPLDEIGGIAVETVTEDAHTSLRLHRRGYTSAYMRIPQAAGLATESLSAHIGQRIRWARGMVQIFRLDNPLTGKGLKFAQRLCYVNAMFHFLSGIPRLIFLTAPLAFLLLHAYIIYAPALMIALFVLPHMIHASLTNSKIQGKYRHSFWSEIYETVLAWYIAPPTLVALINPHKGKFNVTAKGGLVEEEYVDWVISRPYIFLVLLNLVGVAVGIWRYFYGPPTEMLTVVVSMVWVFYNLIVLGGAVAVSVESKQVRRSHRVEMTMPAAIAREDGHLFSCTVQDFSDGGLGIKINGQAQILEGQKVNLLLKRGQQEYVFPTQVARVMGNEVGLKLMPLTTQQHIDFVQCTFARADTWALWQDSYPEDKPLESLLDILKLGFRGYRHLAEFAPSSVKGIFRVLTSLVSWVVSFIPRRPERSETAQPSDQALAQQ</sequence>
<organism>
    <name type="scientific">Escherichia coli O157:H7</name>
    <dbReference type="NCBI Taxonomy" id="83334"/>
    <lineage>
        <taxon>Bacteria</taxon>
        <taxon>Pseudomonadati</taxon>
        <taxon>Pseudomonadota</taxon>
        <taxon>Gammaproteobacteria</taxon>
        <taxon>Enterobacterales</taxon>
        <taxon>Enterobacteriaceae</taxon>
        <taxon>Escherichia</taxon>
    </lineage>
</organism>
<reference key="1">
    <citation type="journal article" date="2001" name="Nature">
        <title>Genome sequence of enterohaemorrhagic Escherichia coli O157:H7.</title>
        <authorList>
            <person name="Perna N.T."/>
            <person name="Plunkett G. III"/>
            <person name="Burland V."/>
            <person name="Mau B."/>
            <person name="Glasner J.D."/>
            <person name="Rose D.J."/>
            <person name="Mayhew G.F."/>
            <person name="Evans P.S."/>
            <person name="Gregor J."/>
            <person name="Kirkpatrick H.A."/>
            <person name="Posfai G."/>
            <person name="Hackett J."/>
            <person name="Klink S."/>
            <person name="Boutin A."/>
            <person name="Shao Y."/>
            <person name="Miller L."/>
            <person name="Grotbeck E.J."/>
            <person name="Davis N.W."/>
            <person name="Lim A."/>
            <person name="Dimalanta E.T."/>
            <person name="Potamousis K."/>
            <person name="Apodaca J."/>
            <person name="Anantharaman T.S."/>
            <person name="Lin J."/>
            <person name="Yen G."/>
            <person name="Schwartz D.C."/>
            <person name="Welch R.A."/>
            <person name="Blattner F.R."/>
        </authorList>
    </citation>
    <scope>NUCLEOTIDE SEQUENCE [LARGE SCALE GENOMIC DNA]</scope>
    <source>
        <strain>O157:H7 / EDL933 / ATCC 700927 / EHEC</strain>
    </source>
</reference>
<reference key="2">
    <citation type="journal article" date="2001" name="DNA Res.">
        <title>Complete genome sequence of enterohemorrhagic Escherichia coli O157:H7 and genomic comparison with a laboratory strain K-12.</title>
        <authorList>
            <person name="Hayashi T."/>
            <person name="Makino K."/>
            <person name="Ohnishi M."/>
            <person name="Kurokawa K."/>
            <person name="Ishii K."/>
            <person name="Yokoyama K."/>
            <person name="Han C.-G."/>
            <person name="Ohtsubo E."/>
            <person name="Nakayama K."/>
            <person name="Murata T."/>
            <person name="Tanaka M."/>
            <person name="Tobe T."/>
            <person name="Iida T."/>
            <person name="Takami H."/>
            <person name="Honda T."/>
            <person name="Sasakawa C."/>
            <person name="Ogasawara N."/>
            <person name="Yasunaga T."/>
            <person name="Kuhara S."/>
            <person name="Shiba T."/>
            <person name="Hattori M."/>
            <person name="Shinagawa H."/>
        </authorList>
    </citation>
    <scope>NUCLEOTIDE SEQUENCE [LARGE SCALE GENOMIC DNA]</scope>
    <source>
        <strain>O157:H7 / Sakai / RIMD 0509952 / EHEC</strain>
    </source>
</reference>
<dbReference type="EC" id="2.4.1.12"/>
<dbReference type="EMBL" id="AE005174">
    <property type="protein sequence ID" value="AAG58675.1"/>
    <property type="status" value="ALT_INIT"/>
    <property type="molecule type" value="Genomic_DNA"/>
</dbReference>
<dbReference type="EMBL" id="BA000007">
    <property type="protein sequence ID" value="BAB37836.2"/>
    <property type="molecule type" value="Genomic_DNA"/>
</dbReference>
<dbReference type="PIR" id="E91180">
    <property type="entry name" value="E91180"/>
</dbReference>
<dbReference type="PIR" id="G86026">
    <property type="entry name" value="G86026"/>
</dbReference>
<dbReference type="RefSeq" id="NP_312440.2">
    <property type="nucleotide sequence ID" value="NC_002695.1"/>
</dbReference>
<dbReference type="RefSeq" id="WP_000025873.1">
    <property type="nucleotide sequence ID" value="NZ_VOAI01000004.1"/>
</dbReference>
<dbReference type="SMR" id="Q8X5L7"/>
<dbReference type="STRING" id="155864.Z4948"/>
<dbReference type="GeneID" id="915726"/>
<dbReference type="KEGG" id="ece:Z4948"/>
<dbReference type="KEGG" id="ecs:ECs_4413"/>
<dbReference type="PATRIC" id="fig|386585.9.peg.4614"/>
<dbReference type="eggNOG" id="COG1215">
    <property type="taxonomic scope" value="Bacteria"/>
</dbReference>
<dbReference type="HOGENOM" id="CLU_011907_5_0_6"/>
<dbReference type="OMA" id="AWYIARP"/>
<dbReference type="UniPathway" id="UPA00694"/>
<dbReference type="Proteomes" id="UP000000558">
    <property type="component" value="Chromosome"/>
</dbReference>
<dbReference type="Proteomes" id="UP000002519">
    <property type="component" value="Chromosome"/>
</dbReference>
<dbReference type="GO" id="GO:0005886">
    <property type="term" value="C:plasma membrane"/>
    <property type="evidence" value="ECO:0007669"/>
    <property type="project" value="UniProtKB-SubCell"/>
</dbReference>
<dbReference type="GO" id="GO:0016760">
    <property type="term" value="F:cellulose synthase (UDP-forming) activity"/>
    <property type="evidence" value="ECO:0007669"/>
    <property type="project" value="UniProtKB-EC"/>
</dbReference>
<dbReference type="GO" id="GO:0035438">
    <property type="term" value="F:cyclic-di-GMP binding"/>
    <property type="evidence" value="ECO:0007669"/>
    <property type="project" value="InterPro"/>
</dbReference>
<dbReference type="GO" id="GO:0030244">
    <property type="term" value="P:cellulose biosynthetic process"/>
    <property type="evidence" value="ECO:0007669"/>
    <property type="project" value="UniProtKB-KW"/>
</dbReference>
<dbReference type="GO" id="GO:0006011">
    <property type="term" value="P:UDP-alpha-D-glucose metabolic process"/>
    <property type="evidence" value="ECO:0007669"/>
    <property type="project" value="InterPro"/>
</dbReference>
<dbReference type="CDD" id="cd06421">
    <property type="entry name" value="CESA_CelA_like"/>
    <property type="match status" value="1"/>
</dbReference>
<dbReference type="FunFam" id="2.40.10.220:FF:000001">
    <property type="entry name" value="Cellulose synthase catalytic subunit [UDP-forming]"/>
    <property type="match status" value="1"/>
</dbReference>
<dbReference type="FunFam" id="3.90.550.10:FF:000061">
    <property type="entry name" value="Cellulose synthase catalytic subunit [UDP-forming]"/>
    <property type="match status" value="1"/>
</dbReference>
<dbReference type="Gene3D" id="2.40.10.220">
    <property type="entry name" value="predicted glycosyltransferase like domains"/>
    <property type="match status" value="1"/>
</dbReference>
<dbReference type="Gene3D" id="3.90.550.10">
    <property type="entry name" value="Spore Coat Polysaccharide Biosynthesis Protein SpsA, Chain A"/>
    <property type="match status" value="1"/>
</dbReference>
<dbReference type="InterPro" id="IPR003919">
    <property type="entry name" value="Cell_synth_A"/>
</dbReference>
<dbReference type="InterPro" id="IPR001173">
    <property type="entry name" value="Glyco_trans_2-like"/>
</dbReference>
<dbReference type="InterPro" id="IPR050321">
    <property type="entry name" value="Glycosyltr_2/OpgH_subfam"/>
</dbReference>
<dbReference type="InterPro" id="IPR029044">
    <property type="entry name" value="Nucleotide-diphossugar_trans"/>
</dbReference>
<dbReference type="InterPro" id="IPR009875">
    <property type="entry name" value="PilZ_domain"/>
</dbReference>
<dbReference type="NCBIfam" id="TIGR03030">
    <property type="entry name" value="CelA"/>
    <property type="match status" value="1"/>
</dbReference>
<dbReference type="NCBIfam" id="NF008558">
    <property type="entry name" value="PRK11498.1"/>
    <property type="match status" value="1"/>
</dbReference>
<dbReference type="PANTHER" id="PTHR43867">
    <property type="entry name" value="CELLULOSE SYNTHASE CATALYTIC SUBUNIT A [UDP-FORMING]"/>
    <property type="match status" value="1"/>
</dbReference>
<dbReference type="PANTHER" id="PTHR43867:SF2">
    <property type="entry name" value="CELLULOSE SYNTHASE CATALYTIC SUBUNIT A [UDP-FORMING]"/>
    <property type="match status" value="1"/>
</dbReference>
<dbReference type="Pfam" id="PF00535">
    <property type="entry name" value="Glycos_transf_2"/>
    <property type="match status" value="1"/>
</dbReference>
<dbReference type="Pfam" id="PF07238">
    <property type="entry name" value="PilZ"/>
    <property type="match status" value="1"/>
</dbReference>
<dbReference type="PRINTS" id="PR01439">
    <property type="entry name" value="CELLSNTHASEA"/>
</dbReference>
<dbReference type="SUPFAM" id="SSF53448">
    <property type="entry name" value="Nucleotide-diphospho-sugar transferases"/>
    <property type="match status" value="1"/>
</dbReference>
<dbReference type="SUPFAM" id="SSF141371">
    <property type="entry name" value="PilZ domain-like"/>
    <property type="match status" value="1"/>
</dbReference>
<name>BCSA_ECO57</name>
<proteinExistence type="inferred from homology"/>
<gene>
    <name type="primary">bcsA</name>
    <name type="ordered locus">Z4948</name>
    <name type="ordered locus">ECs4413</name>
</gene>
<evidence type="ECO:0000250" key="1"/>
<evidence type="ECO:0000255" key="2"/>
<evidence type="ECO:0000305" key="3"/>
<accession>Q8X5L7</accession>
<feature type="chain" id="PRO_0000059268" description="Cellulose synthase catalytic subunit [UDP-forming]">
    <location>
        <begin position="1"/>
        <end position="872"/>
    </location>
</feature>
<feature type="transmembrane region" description="Helical" evidence="2">
    <location>
        <begin position="30"/>
        <end position="50"/>
    </location>
</feature>
<feature type="transmembrane region" description="Helical" evidence="2">
    <location>
        <begin position="151"/>
        <end position="171"/>
    </location>
</feature>
<feature type="transmembrane region" description="Helical" evidence="2">
    <location>
        <begin position="173"/>
        <end position="193"/>
    </location>
</feature>
<feature type="transmembrane region" description="Helical" evidence="2">
    <location>
        <begin position="230"/>
        <end position="250"/>
    </location>
</feature>
<feature type="transmembrane region" description="Helical" evidence="2">
    <location>
        <begin position="525"/>
        <end position="545"/>
    </location>
</feature>
<feature type="transmembrane region" description="Helical" evidence="2">
    <location>
        <begin position="547"/>
        <end position="567"/>
    </location>
</feature>
<feature type="transmembrane region" description="Helical" evidence="2">
    <location>
        <begin position="592"/>
        <end position="612"/>
    </location>
</feature>
<feature type="transmembrane region" description="Helical" evidence="2">
    <location>
        <begin position="640"/>
        <end position="660"/>
    </location>
</feature>
<feature type="transmembrane region" description="Helical" evidence="2">
    <location>
        <begin position="668"/>
        <end position="688"/>
    </location>
</feature>
<feature type="transmembrane region" description="Helical" evidence="2">
    <location>
        <begin position="833"/>
        <end position="853"/>
    </location>
</feature>
<feature type="domain" description="PilZ">
    <location>
        <begin position="694"/>
        <end position="790"/>
    </location>
</feature>
<feature type="region of interest" description="Catalytic subdomain A">
    <location>
        <begin position="271"/>
        <end position="364"/>
    </location>
</feature>
<feature type="region of interest" description="Catalytic subdomain B">
    <location>
        <begin position="441"/>
        <end position="501"/>
    </location>
</feature>
<feature type="active site" evidence="2">
    <location>
        <position position="313"/>
    </location>
</feature>
<feature type="active site" evidence="2">
    <location>
        <position position="457"/>
    </location>
</feature>
<feature type="binding site" evidence="2">
    <location>
        <position position="360"/>
    </location>
    <ligand>
        <name>substrate</name>
    </ligand>
</feature>
<feature type="binding site" evidence="2">
    <location>
        <position position="362"/>
    </location>
    <ligand>
        <name>substrate</name>
    </ligand>
</feature>
<protein>
    <recommendedName>
        <fullName>Cellulose synthase catalytic subunit [UDP-forming]</fullName>
        <ecNumber>2.4.1.12</ecNumber>
    </recommendedName>
</protein>